<feature type="chain" id="PRO_1000004580" description="Translation initiation factor IF-3">
    <location>
        <begin position="1"/>
        <end position="176"/>
    </location>
</feature>
<evidence type="ECO:0000255" key="1">
    <source>
        <dbReference type="HAMAP-Rule" id="MF_00080"/>
    </source>
</evidence>
<name>IF3_STRTD</name>
<gene>
    <name evidence="1" type="primary">infC</name>
    <name type="ordered locus">STER_1089</name>
</gene>
<comment type="function">
    <text evidence="1">IF-3 binds to the 30S ribosomal subunit and shifts the equilibrium between 70S ribosomes and their 50S and 30S subunits in favor of the free subunits, thus enhancing the availability of 30S subunits on which protein synthesis initiation begins.</text>
</comment>
<comment type="subunit">
    <text evidence="1">Monomer.</text>
</comment>
<comment type="subcellular location">
    <subcellularLocation>
        <location evidence="1">Cytoplasm</location>
    </subcellularLocation>
</comment>
<comment type="similarity">
    <text evidence="1">Belongs to the IF-3 family.</text>
</comment>
<sequence>MKIIAKKDLFINDEIRVREVRLVGLDGEQLGIKPLSEAQAIADDANVDLVLIQPQATPPVAKIMNYGKFKFEYQKKQKEQRKKQSVVTVKEVRLSPVIDKGDFETKLRNGRKFLEKGNKVKVSIRFRGRMITHKEIGAKVLAEFAEKTQDIAIIEQRAKMDGRQMFMQLAPIPDKK</sequence>
<reference key="1">
    <citation type="journal article" date="2006" name="Proc. Natl. Acad. Sci. U.S.A.">
        <title>Comparative genomics of the lactic acid bacteria.</title>
        <authorList>
            <person name="Makarova K.S."/>
            <person name="Slesarev A."/>
            <person name="Wolf Y.I."/>
            <person name="Sorokin A."/>
            <person name="Mirkin B."/>
            <person name="Koonin E.V."/>
            <person name="Pavlov A."/>
            <person name="Pavlova N."/>
            <person name="Karamychev V."/>
            <person name="Polouchine N."/>
            <person name="Shakhova V."/>
            <person name="Grigoriev I."/>
            <person name="Lou Y."/>
            <person name="Rohksar D."/>
            <person name="Lucas S."/>
            <person name="Huang K."/>
            <person name="Goodstein D.M."/>
            <person name="Hawkins T."/>
            <person name="Plengvidhya V."/>
            <person name="Welker D."/>
            <person name="Hughes J."/>
            <person name="Goh Y."/>
            <person name="Benson A."/>
            <person name="Baldwin K."/>
            <person name="Lee J.-H."/>
            <person name="Diaz-Muniz I."/>
            <person name="Dosti B."/>
            <person name="Smeianov V."/>
            <person name="Wechter W."/>
            <person name="Barabote R."/>
            <person name="Lorca G."/>
            <person name="Altermann E."/>
            <person name="Barrangou R."/>
            <person name="Ganesan B."/>
            <person name="Xie Y."/>
            <person name="Rawsthorne H."/>
            <person name="Tamir D."/>
            <person name="Parker C."/>
            <person name="Breidt F."/>
            <person name="Broadbent J.R."/>
            <person name="Hutkins R."/>
            <person name="O'Sullivan D."/>
            <person name="Steele J."/>
            <person name="Unlu G."/>
            <person name="Saier M.H. Jr."/>
            <person name="Klaenhammer T."/>
            <person name="Richardson P."/>
            <person name="Kozyavkin S."/>
            <person name="Weimer B.C."/>
            <person name="Mills D.A."/>
        </authorList>
    </citation>
    <scope>NUCLEOTIDE SEQUENCE [LARGE SCALE GENOMIC DNA]</scope>
    <source>
        <strain>ATCC BAA-491 / LMD-9</strain>
    </source>
</reference>
<accession>Q03KI9</accession>
<keyword id="KW-0963">Cytoplasm</keyword>
<keyword id="KW-0396">Initiation factor</keyword>
<keyword id="KW-0648">Protein biosynthesis</keyword>
<proteinExistence type="inferred from homology"/>
<dbReference type="EMBL" id="CP000419">
    <property type="protein sequence ID" value="ABJ66283.1"/>
    <property type="molecule type" value="Genomic_DNA"/>
</dbReference>
<dbReference type="RefSeq" id="WP_011681186.1">
    <property type="nucleotide sequence ID" value="NC_008532.1"/>
</dbReference>
<dbReference type="SMR" id="Q03KI9"/>
<dbReference type="KEGG" id="ste:STER_1089"/>
<dbReference type="HOGENOM" id="CLU_054919_3_2_9"/>
<dbReference type="GO" id="GO:0005829">
    <property type="term" value="C:cytosol"/>
    <property type="evidence" value="ECO:0007669"/>
    <property type="project" value="TreeGrafter"/>
</dbReference>
<dbReference type="GO" id="GO:0016020">
    <property type="term" value="C:membrane"/>
    <property type="evidence" value="ECO:0007669"/>
    <property type="project" value="TreeGrafter"/>
</dbReference>
<dbReference type="GO" id="GO:0043022">
    <property type="term" value="F:ribosome binding"/>
    <property type="evidence" value="ECO:0007669"/>
    <property type="project" value="TreeGrafter"/>
</dbReference>
<dbReference type="GO" id="GO:0003743">
    <property type="term" value="F:translation initiation factor activity"/>
    <property type="evidence" value="ECO:0007669"/>
    <property type="project" value="UniProtKB-UniRule"/>
</dbReference>
<dbReference type="GO" id="GO:0032790">
    <property type="term" value="P:ribosome disassembly"/>
    <property type="evidence" value="ECO:0007669"/>
    <property type="project" value="TreeGrafter"/>
</dbReference>
<dbReference type="FunFam" id="3.10.20.80:FF:000001">
    <property type="entry name" value="Translation initiation factor IF-3"/>
    <property type="match status" value="1"/>
</dbReference>
<dbReference type="FunFam" id="3.30.110.10:FF:000001">
    <property type="entry name" value="Translation initiation factor IF-3"/>
    <property type="match status" value="1"/>
</dbReference>
<dbReference type="Gene3D" id="3.30.110.10">
    <property type="entry name" value="Translation initiation factor 3 (IF-3), C-terminal domain"/>
    <property type="match status" value="1"/>
</dbReference>
<dbReference type="Gene3D" id="3.10.20.80">
    <property type="entry name" value="Translation initiation factor 3 (IF-3), N-terminal domain"/>
    <property type="match status" value="1"/>
</dbReference>
<dbReference type="HAMAP" id="MF_00080">
    <property type="entry name" value="IF_3"/>
    <property type="match status" value="1"/>
</dbReference>
<dbReference type="InterPro" id="IPR036788">
    <property type="entry name" value="T_IF-3_C_sf"/>
</dbReference>
<dbReference type="InterPro" id="IPR036787">
    <property type="entry name" value="T_IF-3_N_sf"/>
</dbReference>
<dbReference type="InterPro" id="IPR019813">
    <property type="entry name" value="Translation_initiation_fac3_CS"/>
</dbReference>
<dbReference type="InterPro" id="IPR001288">
    <property type="entry name" value="Translation_initiation_fac_3"/>
</dbReference>
<dbReference type="InterPro" id="IPR019815">
    <property type="entry name" value="Translation_initiation_fac_3_C"/>
</dbReference>
<dbReference type="InterPro" id="IPR019814">
    <property type="entry name" value="Translation_initiation_fac_3_N"/>
</dbReference>
<dbReference type="NCBIfam" id="TIGR00168">
    <property type="entry name" value="infC"/>
    <property type="match status" value="1"/>
</dbReference>
<dbReference type="PANTHER" id="PTHR10938">
    <property type="entry name" value="TRANSLATION INITIATION FACTOR IF-3"/>
    <property type="match status" value="1"/>
</dbReference>
<dbReference type="PANTHER" id="PTHR10938:SF0">
    <property type="entry name" value="TRANSLATION INITIATION FACTOR IF-3, MITOCHONDRIAL"/>
    <property type="match status" value="1"/>
</dbReference>
<dbReference type="Pfam" id="PF00707">
    <property type="entry name" value="IF3_C"/>
    <property type="match status" value="1"/>
</dbReference>
<dbReference type="Pfam" id="PF05198">
    <property type="entry name" value="IF3_N"/>
    <property type="match status" value="1"/>
</dbReference>
<dbReference type="SUPFAM" id="SSF55200">
    <property type="entry name" value="Translation initiation factor IF3, C-terminal domain"/>
    <property type="match status" value="1"/>
</dbReference>
<dbReference type="SUPFAM" id="SSF54364">
    <property type="entry name" value="Translation initiation factor IF3, N-terminal domain"/>
    <property type="match status" value="1"/>
</dbReference>
<dbReference type="PROSITE" id="PS00938">
    <property type="entry name" value="IF3"/>
    <property type="match status" value="1"/>
</dbReference>
<protein>
    <recommendedName>
        <fullName evidence="1">Translation initiation factor IF-3</fullName>
    </recommendedName>
</protein>
<organism>
    <name type="scientific">Streptococcus thermophilus (strain ATCC BAA-491 / LMD-9)</name>
    <dbReference type="NCBI Taxonomy" id="322159"/>
    <lineage>
        <taxon>Bacteria</taxon>
        <taxon>Bacillati</taxon>
        <taxon>Bacillota</taxon>
        <taxon>Bacilli</taxon>
        <taxon>Lactobacillales</taxon>
        <taxon>Streptococcaceae</taxon>
        <taxon>Streptococcus</taxon>
    </lineage>
</organism>